<comment type="subcellular location">
    <subcellularLocation>
        <location evidence="3">Cell membrane</location>
        <topology evidence="3">Lipid-anchor</topology>
        <orientation evidence="3">Cytoplasmic side</orientation>
    </subcellularLocation>
</comment>
<comment type="similarity">
    <text evidence="3">Belongs to the small GTPase superfamily. Rab family.</text>
</comment>
<gene>
    <name type="primary">rabA</name>
    <name type="ORF">DDB_G0291233</name>
</gene>
<dbReference type="EMBL" id="AAFI02000177">
    <property type="protein sequence ID" value="EAL61600.2"/>
    <property type="molecule type" value="Genomic_DNA"/>
</dbReference>
<dbReference type="EMBL" id="L21011">
    <property type="protein sequence ID" value="AAC37382.1"/>
    <property type="molecule type" value="mRNA"/>
</dbReference>
<dbReference type="RefSeq" id="XP_635210.2">
    <property type="nucleotide sequence ID" value="XM_630118.2"/>
</dbReference>
<dbReference type="SMR" id="P34141"/>
<dbReference type="STRING" id="44689.P34141"/>
<dbReference type="PaxDb" id="44689-DDB0201658"/>
<dbReference type="EnsemblProtists" id="EAL61600">
    <property type="protein sequence ID" value="EAL61600"/>
    <property type="gene ID" value="DDB_G0291233"/>
</dbReference>
<dbReference type="GeneID" id="8628156"/>
<dbReference type="KEGG" id="ddi:DDB_G0291233"/>
<dbReference type="dictyBase" id="DDB_G0291233">
    <property type="gene designation" value="rabA"/>
</dbReference>
<dbReference type="VEuPathDB" id="AmoebaDB:DDB_G0291233"/>
<dbReference type="eggNOG" id="KOG0084">
    <property type="taxonomic scope" value="Eukaryota"/>
</dbReference>
<dbReference type="HOGENOM" id="CLU_041217_23_1_1"/>
<dbReference type="InParanoid" id="P34141"/>
<dbReference type="OMA" id="QERFRVH"/>
<dbReference type="PhylomeDB" id="P34141"/>
<dbReference type="Reactome" id="R-DDI-162658">
    <property type="pathway name" value="Golgi Cisternae Pericentriolar Stack Reorganization"/>
</dbReference>
<dbReference type="Reactome" id="R-DDI-204005">
    <property type="pathway name" value="COPII-mediated vesicle transport"/>
</dbReference>
<dbReference type="Reactome" id="R-DDI-6807878">
    <property type="pathway name" value="COPI-mediated anterograde transport"/>
</dbReference>
<dbReference type="Reactome" id="R-DDI-6811434">
    <property type="pathway name" value="COPI-dependent Golgi-to-ER retrograde traffic"/>
</dbReference>
<dbReference type="Reactome" id="R-DDI-6811440">
    <property type="pathway name" value="Retrograde transport at the Trans-Golgi-Network"/>
</dbReference>
<dbReference type="Reactome" id="R-DDI-8873719">
    <property type="pathway name" value="RAB geranylgeranylation"/>
</dbReference>
<dbReference type="Reactome" id="R-DDI-8876198">
    <property type="pathway name" value="RAB GEFs exchange GTP for GDP on RABs"/>
</dbReference>
<dbReference type="PRO" id="PR:P34141"/>
<dbReference type="Proteomes" id="UP000002195">
    <property type="component" value="Chromosome 6"/>
</dbReference>
<dbReference type="GO" id="GO:0012505">
    <property type="term" value="C:endomembrane system"/>
    <property type="evidence" value="ECO:0000318"/>
    <property type="project" value="GO_Central"/>
</dbReference>
<dbReference type="GO" id="GO:0005886">
    <property type="term" value="C:plasma membrane"/>
    <property type="evidence" value="ECO:0007669"/>
    <property type="project" value="UniProtKB-SubCell"/>
</dbReference>
<dbReference type="GO" id="GO:0005525">
    <property type="term" value="F:GTP binding"/>
    <property type="evidence" value="ECO:0007669"/>
    <property type="project" value="UniProtKB-KW"/>
</dbReference>
<dbReference type="GO" id="GO:0003924">
    <property type="term" value="F:GTPase activity"/>
    <property type="evidence" value="ECO:0000318"/>
    <property type="project" value="GO_Central"/>
</dbReference>
<dbReference type="GO" id="GO:0006971">
    <property type="term" value="P:hypotonic response"/>
    <property type="evidence" value="ECO:0007007"/>
    <property type="project" value="dictyBase"/>
</dbReference>
<dbReference type="GO" id="GO:0006886">
    <property type="term" value="P:intracellular protein transport"/>
    <property type="evidence" value="ECO:0000318"/>
    <property type="project" value="GO_Central"/>
</dbReference>
<dbReference type="FunFam" id="3.40.50.300:FF:001447">
    <property type="entry name" value="Ras-related protein Rab-1B"/>
    <property type="match status" value="1"/>
</dbReference>
<dbReference type="Gene3D" id="3.40.50.300">
    <property type="entry name" value="P-loop containing nucleotide triphosphate hydrolases"/>
    <property type="match status" value="1"/>
</dbReference>
<dbReference type="InterPro" id="IPR027417">
    <property type="entry name" value="P-loop_NTPase"/>
</dbReference>
<dbReference type="InterPro" id="IPR050227">
    <property type="entry name" value="Rab"/>
</dbReference>
<dbReference type="InterPro" id="IPR005225">
    <property type="entry name" value="Small_GTP-bd"/>
</dbReference>
<dbReference type="InterPro" id="IPR001806">
    <property type="entry name" value="Small_GTPase"/>
</dbReference>
<dbReference type="NCBIfam" id="TIGR00231">
    <property type="entry name" value="small_GTP"/>
    <property type="match status" value="1"/>
</dbReference>
<dbReference type="PANTHER" id="PTHR47977">
    <property type="entry name" value="RAS-RELATED PROTEIN RAB"/>
    <property type="match status" value="1"/>
</dbReference>
<dbReference type="Pfam" id="PF00071">
    <property type="entry name" value="Ras"/>
    <property type="match status" value="1"/>
</dbReference>
<dbReference type="PRINTS" id="PR00449">
    <property type="entry name" value="RASTRNSFRMNG"/>
</dbReference>
<dbReference type="SMART" id="SM00175">
    <property type="entry name" value="RAB"/>
    <property type="match status" value="1"/>
</dbReference>
<dbReference type="SMART" id="SM00176">
    <property type="entry name" value="RAN"/>
    <property type="match status" value="1"/>
</dbReference>
<dbReference type="SMART" id="SM00173">
    <property type="entry name" value="RAS"/>
    <property type="match status" value="1"/>
</dbReference>
<dbReference type="SMART" id="SM00174">
    <property type="entry name" value="RHO"/>
    <property type="match status" value="1"/>
</dbReference>
<dbReference type="SUPFAM" id="SSF52540">
    <property type="entry name" value="P-loop containing nucleoside triphosphate hydrolases"/>
    <property type="match status" value="1"/>
</dbReference>
<dbReference type="PROSITE" id="PS51419">
    <property type="entry name" value="RAB"/>
    <property type="match status" value="1"/>
</dbReference>
<protein>
    <recommendedName>
        <fullName>Ras-related protein RabA</fullName>
    </recommendedName>
</protein>
<proteinExistence type="evidence at transcript level"/>
<feature type="chain" id="PRO_0000121268" description="Ras-related protein RabA">
    <location>
        <begin position="1"/>
        <end position="198"/>
    </location>
</feature>
<feature type="propeptide" id="PRO_0000370831" description="Removed in mature form" evidence="2">
    <location>
        <begin position="199"/>
        <end position="201"/>
    </location>
</feature>
<feature type="short sequence motif" description="Effector region" evidence="1">
    <location>
        <begin position="37"/>
        <end position="45"/>
    </location>
</feature>
<feature type="binding site" evidence="1">
    <location>
        <begin position="15"/>
        <end position="22"/>
    </location>
    <ligand>
        <name>GTP</name>
        <dbReference type="ChEBI" id="CHEBI:37565"/>
    </ligand>
</feature>
<feature type="binding site" evidence="1">
    <location>
        <begin position="63"/>
        <end position="67"/>
    </location>
    <ligand>
        <name>GTP</name>
        <dbReference type="ChEBI" id="CHEBI:37565"/>
    </ligand>
</feature>
<feature type="binding site" evidence="1">
    <location>
        <begin position="121"/>
        <end position="124"/>
    </location>
    <ligand>
        <name>GTP</name>
        <dbReference type="ChEBI" id="CHEBI:37565"/>
    </ligand>
</feature>
<feature type="modified residue" description="Cysteine methyl ester" evidence="2">
    <location>
        <position position="198"/>
    </location>
</feature>
<feature type="lipid moiety-binding region" description="S-geranylgeranyl cysteine" evidence="1">
    <location>
        <position position="198"/>
    </location>
</feature>
<feature type="sequence conflict" description="In Ref. 2; AAC37382." evidence="3" ref="2">
    <original>K</original>
    <variation>E</variation>
    <location>
        <position position="4"/>
    </location>
</feature>
<feature type="sequence conflict" description="In Ref. 2; AAC37382." evidence="3" ref="2">
    <original>D</original>
    <variation>H</variation>
    <location>
        <position position="112"/>
    </location>
</feature>
<sequence length="201" mass="23016">MSKKYEHLFKFIFVGDSGVGKSSILLRFTEDTFTESYISTIGVDFKIKTVYIEGKAIKLQIWDTAGQERFRVHNNSQYRGCHAVMVVYDVTDQRSFENVAKWIQEIERYARDNVIKMIIGNKSDMISQKVVDPFLAQEFADSLDITFKETSAKQAINIEDAFISLVKLCIDRIEEFKPSSTSSSTIILKKPQSQKSNCIIN</sequence>
<keyword id="KW-1003">Cell membrane</keyword>
<keyword id="KW-0342">GTP-binding</keyword>
<keyword id="KW-0449">Lipoprotein</keyword>
<keyword id="KW-0472">Membrane</keyword>
<keyword id="KW-0488">Methylation</keyword>
<keyword id="KW-0547">Nucleotide-binding</keyword>
<keyword id="KW-0636">Prenylation</keyword>
<keyword id="KW-1185">Reference proteome</keyword>
<accession>P34141</accession>
<accession>Q54EN0</accession>
<evidence type="ECO:0000250" key="1"/>
<evidence type="ECO:0000255" key="2"/>
<evidence type="ECO:0000305" key="3"/>
<name>RABA_DICDI</name>
<organism>
    <name type="scientific">Dictyostelium discoideum</name>
    <name type="common">Social amoeba</name>
    <dbReference type="NCBI Taxonomy" id="44689"/>
    <lineage>
        <taxon>Eukaryota</taxon>
        <taxon>Amoebozoa</taxon>
        <taxon>Evosea</taxon>
        <taxon>Eumycetozoa</taxon>
        <taxon>Dictyostelia</taxon>
        <taxon>Dictyosteliales</taxon>
        <taxon>Dictyosteliaceae</taxon>
        <taxon>Dictyostelium</taxon>
    </lineage>
</organism>
<reference key="1">
    <citation type="journal article" date="2005" name="Nature">
        <title>The genome of the social amoeba Dictyostelium discoideum.</title>
        <authorList>
            <person name="Eichinger L."/>
            <person name="Pachebat J.A."/>
            <person name="Gloeckner G."/>
            <person name="Rajandream M.A."/>
            <person name="Sucgang R."/>
            <person name="Berriman M."/>
            <person name="Song J."/>
            <person name="Olsen R."/>
            <person name="Szafranski K."/>
            <person name="Xu Q."/>
            <person name="Tunggal B."/>
            <person name="Kummerfeld S."/>
            <person name="Madera M."/>
            <person name="Konfortov B.A."/>
            <person name="Rivero F."/>
            <person name="Bankier A.T."/>
            <person name="Lehmann R."/>
            <person name="Hamlin N."/>
            <person name="Davies R."/>
            <person name="Gaudet P."/>
            <person name="Fey P."/>
            <person name="Pilcher K."/>
            <person name="Chen G."/>
            <person name="Saunders D."/>
            <person name="Sodergren E.J."/>
            <person name="Davis P."/>
            <person name="Kerhornou A."/>
            <person name="Nie X."/>
            <person name="Hall N."/>
            <person name="Anjard C."/>
            <person name="Hemphill L."/>
            <person name="Bason N."/>
            <person name="Farbrother P."/>
            <person name="Desany B."/>
            <person name="Just E."/>
            <person name="Morio T."/>
            <person name="Rost R."/>
            <person name="Churcher C.M."/>
            <person name="Cooper J."/>
            <person name="Haydock S."/>
            <person name="van Driessche N."/>
            <person name="Cronin A."/>
            <person name="Goodhead I."/>
            <person name="Muzny D.M."/>
            <person name="Mourier T."/>
            <person name="Pain A."/>
            <person name="Lu M."/>
            <person name="Harper D."/>
            <person name="Lindsay R."/>
            <person name="Hauser H."/>
            <person name="James K.D."/>
            <person name="Quiles M."/>
            <person name="Madan Babu M."/>
            <person name="Saito T."/>
            <person name="Buchrieser C."/>
            <person name="Wardroper A."/>
            <person name="Felder M."/>
            <person name="Thangavelu M."/>
            <person name="Johnson D."/>
            <person name="Knights A."/>
            <person name="Loulseged H."/>
            <person name="Mungall K.L."/>
            <person name="Oliver K."/>
            <person name="Price C."/>
            <person name="Quail M.A."/>
            <person name="Urushihara H."/>
            <person name="Hernandez J."/>
            <person name="Rabbinowitsch E."/>
            <person name="Steffen D."/>
            <person name="Sanders M."/>
            <person name="Ma J."/>
            <person name="Kohara Y."/>
            <person name="Sharp S."/>
            <person name="Simmonds M.N."/>
            <person name="Spiegler S."/>
            <person name="Tivey A."/>
            <person name="Sugano S."/>
            <person name="White B."/>
            <person name="Walker D."/>
            <person name="Woodward J.R."/>
            <person name="Winckler T."/>
            <person name="Tanaka Y."/>
            <person name="Shaulsky G."/>
            <person name="Schleicher M."/>
            <person name="Weinstock G.M."/>
            <person name="Rosenthal A."/>
            <person name="Cox E.C."/>
            <person name="Chisholm R.L."/>
            <person name="Gibbs R.A."/>
            <person name="Loomis W.F."/>
            <person name="Platzer M."/>
            <person name="Kay R.R."/>
            <person name="Williams J.G."/>
            <person name="Dear P.H."/>
            <person name="Noegel A.A."/>
            <person name="Barrell B.G."/>
            <person name="Kuspa A."/>
        </authorList>
    </citation>
    <scope>NUCLEOTIDE SEQUENCE [LARGE SCALE GENOMIC DNA]</scope>
    <source>
        <strain>AX4</strain>
    </source>
</reference>
<reference key="2">
    <citation type="journal article" date="1993" name="Gene">
        <title>Cloning and characterization of five novel Dictyostelium discoideum rab-related genes.</title>
        <authorList>
            <person name="Bush J.M. IV"/>
            <person name="Franek K."/>
            <person name="Daniel J.M."/>
            <person name="Spiegelman G.B."/>
            <person name="Weeks G."/>
            <person name="Cardelli J.A."/>
        </authorList>
    </citation>
    <scope>NUCLEOTIDE SEQUENCE [MRNA] OF 3-201</scope>
    <source>
        <strain>AX3</strain>
    </source>
</reference>